<accession>A0A1G9VRW7</accession>
<comment type="function">
    <text evidence="2">Diterpene synthase that catalyzes the conversion of geranylgeranyl diphosphate (GGPP) to phomopsene, a diterpene previously reported from the fungus P.amygdali (PubMed:29758116). Phomopsene is the main product, but the enzyme can also produce allokutznerene (about 50% of phomopsene production activity) and traces of spiroviolene (PubMed:29758116). Cannot use geranyl diphosphate (GPP), farnesyl diphosphate (FPP) and geranylfarnesyl diphosphate (GFPP) (PubMed:29758116).</text>
</comment>
<comment type="catalytic activity">
    <reaction evidence="2">
        <text>(2E,6E,10E)-geranylgeranyl diphosphate = phomopsene + diphosphate</text>
        <dbReference type="Rhea" id="RHEA:64856"/>
        <dbReference type="ChEBI" id="CHEBI:33019"/>
        <dbReference type="ChEBI" id="CHEBI:58756"/>
        <dbReference type="ChEBI" id="CHEBI:156237"/>
        <dbReference type="EC" id="4.2.3.222"/>
    </reaction>
    <physiologicalReaction direction="left-to-right" evidence="2">
        <dbReference type="Rhea" id="RHEA:64857"/>
    </physiologicalReaction>
</comment>
<comment type="catalytic activity">
    <reaction evidence="2">
        <text>(2E,6E,10E)-geranylgeranyl diphosphate = allokutznerene + diphosphate</text>
        <dbReference type="Rhea" id="RHEA:78983"/>
        <dbReference type="ChEBI" id="CHEBI:33019"/>
        <dbReference type="ChEBI" id="CHEBI:58756"/>
        <dbReference type="ChEBI" id="CHEBI:219780"/>
        <dbReference type="EC" id="4.2.3.224"/>
    </reaction>
    <physiologicalReaction direction="left-to-right" evidence="2">
        <dbReference type="Rhea" id="RHEA:78984"/>
    </physiologicalReaction>
</comment>
<comment type="cofactor">
    <cofactor evidence="2">
        <name>Mg(2+)</name>
        <dbReference type="ChEBI" id="CHEBI:18420"/>
    </cofactor>
    <text evidence="1 2">Binds 3 Mg(2+) ions per subunit (By similarity). Mg(2+) can be substituted with Mn(2+), with a loss of approximately half of the activity (PubMed:29758116).</text>
</comment>
<comment type="pathway">
    <text evidence="5">Secondary metabolite biosynthesis; terpenoid biosynthesis.</text>
</comment>
<comment type="similarity">
    <text evidence="4">Belongs to the terpene synthase family.</text>
</comment>
<keyword id="KW-0456">Lyase</keyword>
<keyword id="KW-0460">Magnesium</keyword>
<keyword id="KW-0479">Metal-binding</keyword>
<keyword id="KW-1185">Reference proteome</keyword>
<protein>
    <recommendedName>
        <fullName evidence="3">Phomopsene synthase</fullName>
        <shortName evidence="3">PmS</shortName>
        <ecNumber evidence="2">4.2.3.222</ecNumber>
    </recommendedName>
    <alternativeName>
        <fullName evidence="4">Allokutznerene synthase</fullName>
        <ecNumber evidence="2">4.2.3.224</ecNumber>
    </alternativeName>
    <alternativeName>
        <fullName evidence="3">Diterpene synthase</fullName>
    </alternativeName>
</protein>
<dbReference type="EC" id="4.2.3.222" evidence="2"/>
<dbReference type="EC" id="4.2.3.224" evidence="2"/>
<dbReference type="EMBL" id="LT629701">
    <property type="protein sequence ID" value="SDM74615.1"/>
    <property type="molecule type" value="Genomic_DNA"/>
</dbReference>
<dbReference type="RefSeq" id="WP_052407688.1">
    <property type="nucleotide sequence ID" value="NZ_JOEF01000019.1"/>
</dbReference>
<dbReference type="SMR" id="A0A1G9VRW7"/>
<dbReference type="STRING" id="211114.SAMN04489726_3184"/>
<dbReference type="eggNOG" id="COG0664">
    <property type="taxonomic scope" value="Bacteria"/>
</dbReference>
<dbReference type="OrthoDB" id="2989600at2"/>
<dbReference type="UniPathway" id="UPA00213"/>
<dbReference type="Proteomes" id="UP000183376">
    <property type="component" value="Chromosome i"/>
</dbReference>
<dbReference type="GO" id="GO:0046872">
    <property type="term" value="F:metal ion binding"/>
    <property type="evidence" value="ECO:0007669"/>
    <property type="project" value="UniProtKB-KW"/>
</dbReference>
<dbReference type="GO" id="GO:0010333">
    <property type="term" value="F:terpene synthase activity"/>
    <property type="evidence" value="ECO:0007669"/>
    <property type="project" value="InterPro"/>
</dbReference>
<dbReference type="Gene3D" id="1.10.600.10">
    <property type="entry name" value="Farnesyl Diphosphate Synthase"/>
    <property type="match status" value="1"/>
</dbReference>
<dbReference type="InterPro" id="IPR008949">
    <property type="entry name" value="Isoprenoid_synthase_dom_sf"/>
</dbReference>
<dbReference type="InterPro" id="IPR034686">
    <property type="entry name" value="Terpene_cyclase-like_2"/>
</dbReference>
<dbReference type="Pfam" id="PF19086">
    <property type="entry name" value="Terpene_syn_C_2"/>
    <property type="match status" value="1"/>
</dbReference>
<dbReference type="SFLD" id="SFLDS00005">
    <property type="entry name" value="Isoprenoid_Synthase_Type_I"/>
    <property type="match status" value="1"/>
</dbReference>
<dbReference type="SFLD" id="SFLDG01020">
    <property type="entry name" value="Terpene_Cyclase_Like_2"/>
    <property type="match status" value="1"/>
</dbReference>
<dbReference type="SUPFAM" id="SSF48576">
    <property type="entry name" value="Terpenoid synthases"/>
    <property type="match status" value="1"/>
</dbReference>
<proteinExistence type="evidence at protein level"/>
<evidence type="ECO:0000250" key="1">
    <source>
        <dbReference type="UniProtKB" id="B5HDJ6"/>
    </source>
</evidence>
<evidence type="ECO:0000269" key="2">
    <source>
    </source>
</evidence>
<evidence type="ECO:0000303" key="3">
    <source>
    </source>
</evidence>
<evidence type="ECO:0000305" key="4"/>
<evidence type="ECO:0000305" key="5">
    <source>
    </source>
</evidence>
<evidence type="ECO:0000312" key="6">
    <source>
        <dbReference type="EMBL" id="SDM74615.1"/>
    </source>
</evidence>
<gene>
    <name evidence="6" type="ORF">SAMN04489726_3184</name>
</gene>
<name>PMS_ALLAB</name>
<sequence>MTTRTESPTVVQLPPVYFPTALKVHPQIELMEERGLEWMARYGFCSDPVQATRVRDSRSAHFFGYLCPKADPDRLQAAVDWGYLMFAFDDVSSDGDSSALLDIAVRIVRTLEAPDANVLPSDNPYTAPIVDLATRVHRTCAPEHVRRLVDSHTKWLLGAAWECAVRQRPSINDYLSARVMYAGAEPTFTWFQLSEAVVVPEQEITSPRVRALTEMAGTVAAIDNDLYSHGKELWTRQSRSDLSGTGLDLPSCVALRDRIVARFFELRNEVLPTASPALARYLHNLTCALRGNFEWGLETERYSNPDGNHPGAVRTLGSVSNTPSAVGPPGIPSIDWWWR</sequence>
<reference key="1">
    <citation type="submission" date="2016-10" db="EMBL/GenBank/DDBJ databases">
        <authorList>
            <person name="Varghese N."/>
        </authorList>
    </citation>
    <scope>NUCLEOTIDE SEQUENCE [LARGE SCALE GENOMIC DNA]</scope>
    <source>
        <strain>ATCC 55061 / DSM 44149 / JCM 9917 / KCTC 9837 / NRRL B-24461 / NBRC 101910 / NCIMB 13433 / R761-7</strain>
    </source>
</reference>
<reference key="2">
    <citation type="journal article" date="2018" name="Angew. Chem. Int. Ed.">
        <title>Two Bacterial Diterpene Synthases from Allokutzneria albata Produce Bonnadiene, Phomopsene, and Allokutznerene.</title>
        <authorList>
            <person name="Lauterbach L."/>
            <person name="Rinkel J."/>
            <person name="Dickschat J.S."/>
        </authorList>
    </citation>
    <scope>FUNCTION</scope>
    <scope>CATALYTIC ACTIVITY</scope>
    <scope>REACTION MECHANISM</scope>
    <scope>COFACTOR</scope>
    <scope>MUTAGENESIS OF PRO-68; LEU-75 AND ARG-147</scope>
    <source>
        <strain>ATCC 55061 / DSM 44149 / JCM 9917 / KCTC 9837 / NRRL B-24461 / NBRC 101910 / NCIMB 13433 / R761-7</strain>
    </source>
</reference>
<organism>
    <name type="scientific">Allokutzneria albata</name>
    <name type="common">Kibdelosporangium albatum</name>
    <dbReference type="NCBI Taxonomy" id="211114"/>
    <lineage>
        <taxon>Bacteria</taxon>
        <taxon>Bacillati</taxon>
        <taxon>Actinomycetota</taxon>
        <taxon>Actinomycetes</taxon>
        <taxon>Pseudonocardiales</taxon>
        <taxon>Pseudonocardiaceae</taxon>
        <taxon>Allokutzneria</taxon>
    </lineage>
</organism>
<feature type="chain" id="PRO_0000460715" description="Phomopsene synthase">
    <location>
        <begin position="1"/>
        <end position="339"/>
    </location>
</feature>
<feature type="binding site" evidence="1">
    <location>
        <position position="89"/>
    </location>
    <ligand>
        <name>Mg(2+)</name>
        <dbReference type="ChEBI" id="CHEBI:18420"/>
        <label>1</label>
    </ligand>
</feature>
<feature type="binding site" evidence="1">
    <location>
        <position position="94"/>
    </location>
    <ligand>
        <name>Mg(2+)</name>
        <dbReference type="ChEBI" id="CHEBI:18420"/>
        <label>1</label>
    </ligand>
</feature>
<feature type="binding site" evidence="1">
    <location>
        <position position="94"/>
    </location>
    <ligand>
        <name>Mg(2+)</name>
        <dbReference type="ChEBI" id="CHEBI:18420"/>
        <label>2</label>
    </ligand>
</feature>
<feature type="binding site" evidence="1">
    <location>
        <position position="224"/>
    </location>
    <ligand>
        <name>Mg(2+)</name>
        <dbReference type="ChEBI" id="CHEBI:18420"/>
        <label>3</label>
    </ligand>
</feature>
<feature type="binding site" evidence="1">
    <location>
        <position position="228"/>
    </location>
    <ligand>
        <name>Mg(2+)</name>
        <dbReference type="ChEBI" id="CHEBI:18420"/>
        <label>3</label>
    </ligand>
</feature>
<feature type="binding site" evidence="1">
    <location>
        <position position="232"/>
    </location>
    <ligand>
        <name>Mg(2+)</name>
        <dbReference type="ChEBI" id="CHEBI:18420"/>
        <label>3</label>
    </ligand>
</feature>
<feature type="mutagenesis site" description="Loss of activity with both Mg(2+) and Mn(2+)." evidence="2">
    <original>P</original>
    <variation>A</variation>
    <location>
        <position position="68"/>
    </location>
</feature>
<feature type="mutagenesis site" description="Retains 10% of activity with both Mg(2+) and Mn(2+)." evidence="2">
    <original>L</original>
    <variation>A</variation>
    <location>
        <position position="75"/>
    </location>
</feature>
<feature type="mutagenesis site" description="Loss of activity with both Mg(2+) and Mn(2+)." evidence="2">
    <original>R</original>
    <variation>K</variation>
    <variation>M</variation>
    <location>
        <position position="147"/>
    </location>
</feature>